<gene>
    <name type="ordered locus">VP2328</name>
</gene>
<protein>
    <recommendedName>
        <fullName evidence="1">UPF0178 protein VP2328</fullName>
    </recommendedName>
</protein>
<sequence length="147" mass="16291">MKLWVDADACPKVIRETIVRAAERTGVECTFVANHVVPVPKRANIHSLQVPAGFDIADNEIVRRVEPNDLVITSDIPLADEVITKGALALSSRGELYTKDTIKARLNIRDFMETMRSSGIQTGGPAALSQTERREFANHLDRILAKR</sequence>
<name>Y2328_VIBPA</name>
<reference key="1">
    <citation type="journal article" date="2003" name="Lancet">
        <title>Genome sequence of Vibrio parahaemolyticus: a pathogenic mechanism distinct from that of V. cholerae.</title>
        <authorList>
            <person name="Makino K."/>
            <person name="Oshima K."/>
            <person name="Kurokawa K."/>
            <person name="Yokoyama K."/>
            <person name="Uda T."/>
            <person name="Tagomori K."/>
            <person name="Iijima Y."/>
            <person name="Najima M."/>
            <person name="Nakano M."/>
            <person name="Yamashita A."/>
            <person name="Kubota Y."/>
            <person name="Kimura S."/>
            <person name="Yasunaga T."/>
            <person name="Honda T."/>
            <person name="Shinagawa H."/>
            <person name="Hattori M."/>
            <person name="Iida T."/>
        </authorList>
    </citation>
    <scope>NUCLEOTIDE SEQUENCE [LARGE SCALE GENOMIC DNA]</scope>
    <source>
        <strain>RIMD 2210633</strain>
    </source>
</reference>
<dbReference type="EMBL" id="BA000031">
    <property type="protein sequence ID" value="BAC60591.1"/>
    <property type="molecule type" value="Genomic_DNA"/>
</dbReference>
<dbReference type="RefSeq" id="NP_798707.1">
    <property type="nucleotide sequence ID" value="NC_004603.1"/>
</dbReference>
<dbReference type="RefSeq" id="WP_005456606.1">
    <property type="nucleotide sequence ID" value="NC_004603.1"/>
</dbReference>
<dbReference type="SMR" id="Q87MC8"/>
<dbReference type="GeneID" id="1189841"/>
<dbReference type="KEGG" id="vpa:VP2328"/>
<dbReference type="PATRIC" id="fig|223926.6.peg.2230"/>
<dbReference type="eggNOG" id="COG1671">
    <property type="taxonomic scope" value="Bacteria"/>
</dbReference>
<dbReference type="HOGENOM" id="CLU_106619_2_1_6"/>
<dbReference type="Proteomes" id="UP000002493">
    <property type="component" value="Chromosome 1"/>
</dbReference>
<dbReference type="CDD" id="cd18720">
    <property type="entry name" value="PIN_YqxD-like"/>
    <property type="match status" value="1"/>
</dbReference>
<dbReference type="HAMAP" id="MF_00489">
    <property type="entry name" value="UPF0178"/>
    <property type="match status" value="1"/>
</dbReference>
<dbReference type="InterPro" id="IPR003791">
    <property type="entry name" value="UPF0178"/>
</dbReference>
<dbReference type="NCBIfam" id="NF001095">
    <property type="entry name" value="PRK00124.1"/>
    <property type="match status" value="1"/>
</dbReference>
<dbReference type="PANTHER" id="PTHR35146">
    <property type="entry name" value="UPF0178 PROTEIN YAII"/>
    <property type="match status" value="1"/>
</dbReference>
<dbReference type="PANTHER" id="PTHR35146:SF1">
    <property type="entry name" value="UPF0178 PROTEIN YAII"/>
    <property type="match status" value="1"/>
</dbReference>
<dbReference type="Pfam" id="PF02639">
    <property type="entry name" value="DUF188"/>
    <property type="match status" value="1"/>
</dbReference>
<feature type="chain" id="PRO_0000176021" description="UPF0178 protein VP2328">
    <location>
        <begin position="1"/>
        <end position="147"/>
    </location>
</feature>
<organism>
    <name type="scientific">Vibrio parahaemolyticus serotype O3:K6 (strain RIMD 2210633)</name>
    <dbReference type="NCBI Taxonomy" id="223926"/>
    <lineage>
        <taxon>Bacteria</taxon>
        <taxon>Pseudomonadati</taxon>
        <taxon>Pseudomonadota</taxon>
        <taxon>Gammaproteobacteria</taxon>
        <taxon>Vibrionales</taxon>
        <taxon>Vibrionaceae</taxon>
        <taxon>Vibrio</taxon>
    </lineage>
</organism>
<accession>Q87MC8</accession>
<comment type="similarity">
    <text evidence="1">Belongs to the UPF0178 family.</text>
</comment>
<proteinExistence type="inferred from homology"/>
<evidence type="ECO:0000255" key="1">
    <source>
        <dbReference type="HAMAP-Rule" id="MF_00489"/>
    </source>
</evidence>